<evidence type="ECO:0000250" key="1"/>
<evidence type="ECO:0000250" key="2">
    <source>
        <dbReference type="UniProtKB" id="Q9UJX2"/>
    </source>
</evidence>
<evidence type="ECO:0000303" key="3">
    <source>
    </source>
</evidence>
<evidence type="ECO:0000305" key="4"/>
<evidence type="ECO:0007744" key="5">
    <source>
    </source>
</evidence>
<evidence type="ECO:0007744" key="6">
    <source>
    </source>
</evidence>
<comment type="function">
    <text evidence="2">Component of the anaphase promoting complex/cyclosome (APC/C), a cell cycle-regulated E3 ubiquitin ligase that controls progression through mitosis and the G1 phase of the cell cycle. The APC/C complex acts by mediating ubiquitination and subsequent degradation of target proteins: it mainly mediates the formation of 'Lys-11'-linked polyubiquitin chains and, to a lower extent, the formation of 'Lys-48'- and 'Lys-63'-linked polyubiquitin chains. The APC/C complex catalyzes assembly of branched 'Lys-11'-/'Lys-48'-linked branched ubiquitin chains on target proteins.</text>
</comment>
<comment type="pathway">
    <text evidence="2">Protein modification; protein ubiquitination.</text>
</comment>
<comment type="subunit">
    <text evidence="2">The mammalian APC/C is composed at least of 14 distinct subunits ANAPC1, ANAPC2, CDC27/APC3, ANAPC4, ANAPC5, CDC16/APC6, ANAPC7, CDC23/APC8, ANAPC10, ANAPC11, CDC26/APC12, ANAPC13, ANAPC15 and ANAPC16 that assemble into a complex of at least 19 chains with a combined molecular mass of around 1.2 MDa; APC/C interacts with FZR1 and FBXO5. Interacts with FBXO43; the interaction is direct.</text>
</comment>
<comment type="alternative products">
    <event type="alternative splicing"/>
    <isoform>
        <id>Q8BGZ4-1</id>
        <name>1</name>
        <sequence type="displayed"/>
    </isoform>
    <isoform>
        <id>Q8BGZ4-2</id>
        <name>2</name>
        <sequence type="described" ref="VSP_037679"/>
    </isoform>
</comment>
<comment type="PTM">
    <text evidence="1">Phosphorylated. Phosphorylation on Thr-562 occurs specifically during mitosis (By similarity).</text>
</comment>
<comment type="similarity">
    <text evidence="4">Belongs to the APC8/CDC23 family.</text>
</comment>
<feature type="initiator methionine" description="Removed" evidence="2">
    <location>
        <position position="1"/>
    </location>
</feature>
<feature type="chain" id="PRO_0000106271" description="Cell division cycle protein 23 homolog">
    <location>
        <begin position="2"/>
        <end position="597"/>
    </location>
</feature>
<feature type="repeat" description="TPR 1">
    <location>
        <begin position="27"/>
        <end position="63"/>
    </location>
</feature>
<feature type="repeat" description="TPR 2">
    <location>
        <begin position="73"/>
        <end position="112"/>
    </location>
</feature>
<feature type="repeat" description="TPR 3">
    <location>
        <begin position="114"/>
        <end position="144"/>
    </location>
</feature>
<feature type="repeat" description="TPR 4">
    <location>
        <begin position="169"/>
        <end position="200"/>
    </location>
</feature>
<feature type="repeat" description="TPR 5">
    <location>
        <begin position="229"/>
        <end position="259"/>
    </location>
</feature>
<feature type="repeat" description="TPR 6">
    <location>
        <begin position="263"/>
        <end position="293"/>
    </location>
</feature>
<feature type="repeat" description="TPR 7">
    <location>
        <begin position="297"/>
        <end position="327"/>
    </location>
</feature>
<feature type="repeat" description="TPR 8">
    <location>
        <begin position="331"/>
        <end position="361"/>
    </location>
</feature>
<feature type="repeat" description="TPR 9">
    <location>
        <begin position="366"/>
        <end position="395"/>
    </location>
</feature>
<feature type="repeat" description="TPR 10">
    <location>
        <begin position="400"/>
        <end position="432"/>
    </location>
</feature>
<feature type="repeat" description="TPR 11">
    <location>
        <begin position="433"/>
        <end position="466"/>
    </location>
</feature>
<feature type="repeat" description="TPR 12">
    <location>
        <begin position="468"/>
        <end position="500"/>
    </location>
</feature>
<feature type="repeat" description="TPR 13">
    <location>
        <begin position="504"/>
        <end position="540"/>
    </location>
</feature>
<feature type="modified residue" description="N-acetylalanine" evidence="2">
    <location>
        <position position="2"/>
    </location>
</feature>
<feature type="modified residue" description="Phosphotyrosine" evidence="2">
    <location>
        <position position="273"/>
    </location>
</feature>
<feature type="modified residue" description="N6-acetyllysine" evidence="2">
    <location>
        <position position="467"/>
    </location>
</feature>
<feature type="modified residue" description="Phosphothreonine" evidence="2">
    <location>
        <position position="562"/>
    </location>
</feature>
<feature type="modified residue" description="Phosphoserine" evidence="6">
    <location>
        <position position="578"/>
    </location>
</feature>
<feature type="modified residue" description="Phosphothreonine" evidence="2">
    <location>
        <position position="582"/>
    </location>
</feature>
<feature type="modified residue" description="Phosphoserine" evidence="5 6">
    <location>
        <position position="588"/>
    </location>
</feature>
<feature type="modified residue" description="Phosphoserine" evidence="2">
    <location>
        <position position="593"/>
    </location>
</feature>
<feature type="modified residue" description="Phosphothreonine" evidence="5 6">
    <location>
        <position position="596"/>
    </location>
</feature>
<feature type="cross-link" description="Glycyl lysine isopeptide (Lys-Gly) (interchain with G-Cter in SUMO2)" evidence="2">
    <location>
        <position position="147"/>
    </location>
</feature>
<feature type="splice variant" id="VSP_037679" description="In isoform 2." evidence="3">
    <location>
        <begin position="1"/>
        <end position="118"/>
    </location>
</feature>
<feature type="sequence conflict" description="In Ref. 1; BAC27415 and 2; AAH59013." evidence="4" ref="1 2">
    <original>K</original>
    <variation>M</variation>
    <location>
        <position position="468"/>
    </location>
</feature>
<proteinExistence type="evidence at protein level"/>
<keyword id="KW-0007">Acetylation</keyword>
<keyword id="KW-0025">Alternative splicing</keyword>
<keyword id="KW-0131">Cell cycle</keyword>
<keyword id="KW-0132">Cell division</keyword>
<keyword id="KW-1017">Isopeptide bond</keyword>
<keyword id="KW-0498">Mitosis</keyword>
<keyword id="KW-0597">Phosphoprotein</keyword>
<keyword id="KW-1185">Reference proteome</keyword>
<keyword id="KW-0677">Repeat</keyword>
<keyword id="KW-0802">TPR repeat</keyword>
<keyword id="KW-0832">Ubl conjugation</keyword>
<keyword id="KW-0833">Ubl conjugation pathway</keyword>
<gene>
    <name type="primary">Cdc23</name>
    <name type="synonym">Anapc8</name>
</gene>
<organism>
    <name type="scientific">Mus musculus</name>
    <name type="common">Mouse</name>
    <dbReference type="NCBI Taxonomy" id="10090"/>
    <lineage>
        <taxon>Eukaryota</taxon>
        <taxon>Metazoa</taxon>
        <taxon>Chordata</taxon>
        <taxon>Craniata</taxon>
        <taxon>Vertebrata</taxon>
        <taxon>Euteleostomi</taxon>
        <taxon>Mammalia</taxon>
        <taxon>Eutheria</taxon>
        <taxon>Euarchontoglires</taxon>
        <taxon>Glires</taxon>
        <taxon>Rodentia</taxon>
        <taxon>Myomorpha</taxon>
        <taxon>Muroidea</taxon>
        <taxon>Muridae</taxon>
        <taxon>Murinae</taxon>
        <taxon>Mus</taxon>
        <taxon>Mus</taxon>
    </lineage>
</organism>
<protein>
    <recommendedName>
        <fullName>Cell division cycle protein 23 homolog</fullName>
    </recommendedName>
    <alternativeName>
        <fullName>Anaphase-promoting complex subunit 8</fullName>
        <shortName>APC8</shortName>
    </alternativeName>
    <alternativeName>
        <fullName>Cyclosome subunit 8</fullName>
    </alternativeName>
</protein>
<accession>Q8BGZ4</accession>
<accession>Q6PD06</accession>
<accession>Q8C0F1</accession>
<dbReference type="EMBL" id="AK031459">
    <property type="protein sequence ID" value="BAC27415.1"/>
    <property type="molecule type" value="mRNA"/>
</dbReference>
<dbReference type="EMBL" id="AK038523">
    <property type="protein sequence ID" value="BAC30026.1"/>
    <property type="molecule type" value="mRNA"/>
</dbReference>
<dbReference type="EMBL" id="AK048246">
    <property type="protein sequence ID" value="BAC33283.1"/>
    <property type="molecule type" value="mRNA"/>
</dbReference>
<dbReference type="EMBL" id="AK081461">
    <property type="protein sequence ID" value="BAC38224.1"/>
    <property type="molecule type" value="mRNA"/>
</dbReference>
<dbReference type="EMBL" id="BC059013">
    <property type="protein sequence ID" value="AAH59013.1"/>
    <property type="molecule type" value="mRNA"/>
</dbReference>
<dbReference type="CCDS" id="CCDS29132.1">
    <molecule id="Q8BGZ4-1"/>
</dbReference>
<dbReference type="RefSeq" id="NP_848124.1">
    <property type="nucleotide sequence ID" value="NM_178347.4"/>
</dbReference>
<dbReference type="SMR" id="Q8BGZ4"/>
<dbReference type="BioGRID" id="206665">
    <property type="interactions" value="50"/>
</dbReference>
<dbReference type="CORUM" id="Q8BGZ4"/>
<dbReference type="FunCoup" id="Q8BGZ4">
    <property type="interactions" value="2142"/>
</dbReference>
<dbReference type="IntAct" id="Q8BGZ4">
    <property type="interactions" value="47"/>
</dbReference>
<dbReference type="STRING" id="10090.ENSMUSP00000122420"/>
<dbReference type="GlyGen" id="Q8BGZ4">
    <property type="glycosylation" value="1 site, 1 O-linked glycan (1 site)"/>
</dbReference>
<dbReference type="iPTMnet" id="Q8BGZ4"/>
<dbReference type="PhosphoSitePlus" id="Q8BGZ4"/>
<dbReference type="jPOST" id="Q8BGZ4"/>
<dbReference type="PaxDb" id="10090-ENSMUSP00000122420"/>
<dbReference type="PeptideAtlas" id="Q8BGZ4"/>
<dbReference type="ProteomicsDB" id="281273">
    <molecule id="Q8BGZ4-1"/>
</dbReference>
<dbReference type="ProteomicsDB" id="281274">
    <molecule id="Q8BGZ4-2"/>
</dbReference>
<dbReference type="Pumba" id="Q8BGZ4"/>
<dbReference type="DNASU" id="52563"/>
<dbReference type="GeneID" id="52563"/>
<dbReference type="KEGG" id="mmu:52563"/>
<dbReference type="UCSC" id="uc008elc.1">
    <molecule id="Q8BGZ4-1"/>
    <property type="organism name" value="mouse"/>
</dbReference>
<dbReference type="AGR" id="MGI:1098815"/>
<dbReference type="CTD" id="8697"/>
<dbReference type="MGI" id="MGI:1098815">
    <property type="gene designation" value="Cdc23"/>
</dbReference>
<dbReference type="eggNOG" id="KOG1155">
    <property type="taxonomic scope" value="Eukaryota"/>
</dbReference>
<dbReference type="InParanoid" id="Q8BGZ4"/>
<dbReference type="OrthoDB" id="10262026at2759"/>
<dbReference type="TreeFam" id="TF101055"/>
<dbReference type="Reactome" id="R-MMU-141430">
    <property type="pathway name" value="Inactivation of APC/C via direct inhibition of the APC/C complex"/>
</dbReference>
<dbReference type="Reactome" id="R-MMU-174048">
    <property type="pathway name" value="APC/C:Cdc20 mediated degradation of Cyclin B"/>
</dbReference>
<dbReference type="Reactome" id="R-MMU-174084">
    <property type="pathway name" value="Autodegradation of Cdh1 by Cdh1:APC/C"/>
</dbReference>
<dbReference type="Reactome" id="R-MMU-174154">
    <property type="pathway name" value="APC/C:Cdc20 mediated degradation of Securin"/>
</dbReference>
<dbReference type="Reactome" id="R-MMU-174178">
    <property type="pathway name" value="APC/C:Cdh1 mediated degradation of Cdc20 and other APC/C:Cdh1 targeted proteins in late mitosis/early G1"/>
</dbReference>
<dbReference type="Reactome" id="R-MMU-174184">
    <property type="pathway name" value="Cdc20:Phospho-APC/C mediated degradation of Cyclin A"/>
</dbReference>
<dbReference type="Reactome" id="R-MMU-176407">
    <property type="pathway name" value="Conversion from APC/C:Cdc20 to APC/C:Cdh1 in late anaphase"/>
</dbReference>
<dbReference type="Reactome" id="R-MMU-176408">
    <property type="pathway name" value="Regulation of APC/C activators between G1/S and early anaphase"/>
</dbReference>
<dbReference type="Reactome" id="R-MMU-176409">
    <property type="pathway name" value="APC/C:Cdc20 mediated degradation of mitotic proteins"/>
</dbReference>
<dbReference type="Reactome" id="R-MMU-176412">
    <property type="pathway name" value="Phosphorylation of the APC/C"/>
</dbReference>
<dbReference type="Reactome" id="R-MMU-179409">
    <property type="pathway name" value="APC-Cdc20 mediated degradation of Nek2A"/>
</dbReference>
<dbReference type="Reactome" id="R-MMU-2467813">
    <property type="pathway name" value="Separation of Sister Chromatids"/>
</dbReference>
<dbReference type="Reactome" id="R-MMU-2559582">
    <property type="pathway name" value="Senescence-Associated Secretory Phenotype (SASP)"/>
</dbReference>
<dbReference type="Reactome" id="R-MMU-68867">
    <property type="pathway name" value="Assembly of the pre-replicative complex"/>
</dbReference>
<dbReference type="Reactome" id="R-MMU-69017">
    <property type="pathway name" value="CDK-mediated phosphorylation and removal of Cdc6"/>
</dbReference>
<dbReference type="Reactome" id="R-MMU-983168">
    <property type="pathway name" value="Antigen processing: Ubiquitination &amp; Proteasome degradation"/>
</dbReference>
<dbReference type="UniPathway" id="UPA00143"/>
<dbReference type="BioGRID-ORCS" id="52563">
    <property type="hits" value="19 hits in 73 CRISPR screens"/>
</dbReference>
<dbReference type="ChiTaRS" id="Cdc23">
    <property type="organism name" value="mouse"/>
</dbReference>
<dbReference type="PRO" id="PR:Q8BGZ4"/>
<dbReference type="Proteomes" id="UP000000589">
    <property type="component" value="Unplaced"/>
</dbReference>
<dbReference type="RNAct" id="Q8BGZ4">
    <property type="molecule type" value="protein"/>
</dbReference>
<dbReference type="GO" id="GO:0005680">
    <property type="term" value="C:anaphase-promoting complex"/>
    <property type="evidence" value="ECO:0000250"/>
    <property type="project" value="UniProtKB"/>
</dbReference>
<dbReference type="GO" id="GO:0031145">
    <property type="term" value="P:anaphase-promoting complex-dependent catabolic process"/>
    <property type="evidence" value="ECO:0000250"/>
    <property type="project" value="UniProtKB"/>
</dbReference>
<dbReference type="GO" id="GO:0051301">
    <property type="term" value="P:cell division"/>
    <property type="evidence" value="ECO:0007669"/>
    <property type="project" value="UniProtKB-KW"/>
</dbReference>
<dbReference type="GO" id="GO:0141198">
    <property type="term" value="P:protein branched polyubiquitination"/>
    <property type="evidence" value="ECO:0000250"/>
    <property type="project" value="UniProtKB"/>
</dbReference>
<dbReference type="GO" id="GO:0070979">
    <property type="term" value="P:protein K11-linked ubiquitination"/>
    <property type="evidence" value="ECO:0000250"/>
    <property type="project" value="UniProtKB"/>
</dbReference>
<dbReference type="GO" id="GO:0070936">
    <property type="term" value="P:protein K48-linked ubiquitination"/>
    <property type="evidence" value="ECO:0000250"/>
    <property type="project" value="UniProtKB"/>
</dbReference>
<dbReference type="FunFam" id="1.25.40.10:FF:000093">
    <property type="entry name" value="cell division cycle protein 23 homolog"/>
    <property type="match status" value="1"/>
</dbReference>
<dbReference type="FunFam" id="1.25.40.10:FF:000187">
    <property type="entry name" value="cell division cycle protein 23 homolog"/>
    <property type="match status" value="1"/>
</dbReference>
<dbReference type="Gene3D" id="1.25.40.10">
    <property type="entry name" value="Tetratricopeptide repeat domain"/>
    <property type="match status" value="2"/>
</dbReference>
<dbReference type="InterPro" id="IPR007192">
    <property type="entry name" value="APC8"/>
</dbReference>
<dbReference type="InterPro" id="IPR011990">
    <property type="entry name" value="TPR-like_helical_dom_sf"/>
</dbReference>
<dbReference type="InterPro" id="IPR019734">
    <property type="entry name" value="TPR_rpt"/>
</dbReference>
<dbReference type="PANTHER" id="PTHR12558">
    <property type="entry name" value="CELL DIVISION CYCLE 16,23,27"/>
    <property type="match status" value="1"/>
</dbReference>
<dbReference type="PANTHER" id="PTHR12558:SF10">
    <property type="entry name" value="CELL DIVISION CYCLE PROTEIN 23 HOMOLOG"/>
    <property type="match status" value="1"/>
</dbReference>
<dbReference type="Pfam" id="PF04049">
    <property type="entry name" value="ANAPC8"/>
    <property type="match status" value="1"/>
</dbReference>
<dbReference type="Pfam" id="PF13414">
    <property type="entry name" value="TPR_11"/>
    <property type="match status" value="1"/>
</dbReference>
<dbReference type="Pfam" id="PF13181">
    <property type="entry name" value="TPR_8"/>
    <property type="match status" value="1"/>
</dbReference>
<dbReference type="SMART" id="SM00028">
    <property type="entry name" value="TPR"/>
    <property type="match status" value="7"/>
</dbReference>
<dbReference type="SUPFAM" id="SSF48452">
    <property type="entry name" value="TPR-like"/>
    <property type="match status" value="2"/>
</dbReference>
<dbReference type="PROSITE" id="PS50005">
    <property type="entry name" value="TPR"/>
    <property type="match status" value="6"/>
</dbReference>
<dbReference type="PROSITE" id="PS50293">
    <property type="entry name" value="TPR_REGION"/>
    <property type="match status" value="1"/>
</dbReference>
<reference key="1">
    <citation type="journal article" date="2005" name="Science">
        <title>The transcriptional landscape of the mammalian genome.</title>
        <authorList>
            <person name="Carninci P."/>
            <person name="Kasukawa T."/>
            <person name="Katayama S."/>
            <person name="Gough J."/>
            <person name="Frith M.C."/>
            <person name="Maeda N."/>
            <person name="Oyama R."/>
            <person name="Ravasi T."/>
            <person name="Lenhard B."/>
            <person name="Wells C."/>
            <person name="Kodzius R."/>
            <person name="Shimokawa K."/>
            <person name="Bajic V.B."/>
            <person name="Brenner S.E."/>
            <person name="Batalov S."/>
            <person name="Forrest A.R."/>
            <person name="Zavolan M."/>
            <person name="Davis M.J."/>
            <person name="Wilming L.G."/>
            <person name="Aidinis V."/>
            <person name="Allen J.E."/>
            <person name="Ambesi-Impiombato A."/>
            <person name="Apweiler R."/>
            <person name="Aturaliya R.N."/>
            <person name="Bailey T.L."/>
            <person name="Bansal M."/>
            <person name="Baxter L."/>
            <person name="Beisel K.W."/>
            <person name="Bersano T."/>
            <person name="Bono H."/>
            <person name="Chalk A.M."/>
            <person name="Chiu K.P."/>
            <person name="Choudhary V."/>
            <person name="Christoffels A."/>
            <person name="Clutterbuck D.R."/>
            <person name="Crowe M.L."/>
            <person name="Dalla E."/>
            <person name="Dalrymple B.P."/>
            <person name="de Bono B."/>
            <person name="Della Gatta G."/>
            <person name="di Bernardo D."/>
            <person name="Down T."/>
            <person name="Engstrom P."/>
            <person name="Fagiolini M."/>
            <person name="Faulkner G."/>
            <person name="Fletcher C.F."/>
            <person name="Fukushima T."/>
            <person name="Furuno M."/>
            <person name="Futaki S."/>
            <person name="Gariboldi M."/>
            <person name="Georgii-Hemming P."/>
            <person name="Gingeras T.R."/>
            <person name="Gojobori T."/>
            <person name="Green R.E."/>
            <person name="Gustincich S."/>
            <person name="Harbers M."/>
            <person name="Hayashi Y."/>
            <person name="Hensch T.K."/>
            <person name="Hirokawa N."/>
            <person name="Hill D."/>
            <person name="Huminiecki L."/>
            <person name="Iacono M."/>
            <person name="Ikeo K."/>
            <person name="Iwama A."/>
            <person name="Ishikawa T."/>
            <person name="Jakt M."/>
            <person name="Kanapin A."/>
            <person name="Katoh M."/>
            <person name="Kawasawa Y."/>
            <person name="Kelso J."/>
            <person name="Kitamura H."/>
            <person name="Kitano H."/>
            <person name="Kollias G."/>
            <person name="Krishnan S.P."/>
            <person name="Kruger A."/>
            <person name="Kummerfeld S.K."/>
            <person name="Kurochkin I.V."/>
            <person name="Lareau L.F."/>
            <person name="Lazarevic D."/>
            <person name="Lipovich L."/>
            <person name="Liu J."/>
            <person name="Liuni S."/>
            <person name="McWilliam S."/>
            <person name="Madan Babu M."/>
            <person name="Madera M."/>
            <person name="Marchionni L."/>
            <person name="Matsuda H."/>
            <person name="Matsuzawa S."/>
            <person name="Miki H."/>
            <person name="Mignone F."/>
            <person name="Miyake S."/>
            <person name="Morris K."/>
            <person name="Mottagui-Tabar S."/>
            <person name="Mulder N."/>
            <person name="Nakano N."/>
            <person name="Nakauchi H."/>
            <person name="Ng P."/>
            <person name="Nilsson R."/>
            <person name="Nishiguchi S."/>
            <person name="Nishikawa S."/>
            <person name="Nori F."/>
            <person name="Ohara O."/>
            <person name="Okazaki Y."/>
            <person name="Orlando V."/>
            <person name="Pang K.C."/>
            <person name="Pavan W.J."/>
            <person name="Pavesi G."/>
            <person name="Pesole G."/>
            <person name="Petrovsky N."/>
            <person name="Piazza S."/>
            <person name="Reed J."/>
            <person name="Reid J.F."/>
            <person name="Ring B.Z."/>
            <person name="Ringwald M."/>
            <person name="Rost B."/>
            <person name="Ruan Y."/>
            <person name="Salzberg S.L."/>
            <person name="Sandelin A."/>
            <person name="Schneider C."/>
            <person name="Schoenbach C."/>
            <person name="Sekiguchi K."/>
            <person name="Semple C.A."/>
            <person name="Seno S."/>
            <person name="Sessa L."/>
            <person name="Sheng Y."/>
            <person name="Shibata Y."/>
            <person name="Shimada H."/>
            <person name="Shimada K."/>
            <person name="Silva D."/>
            <person name="Sinclair B."/>
            <person name="Sperling S."/>
            <person name="Stupka E."/>
            <person name="Sugiura K."/>
            <person name="Sultana R."/>
            <person name="Takenaka Y."/>
            <person name="Taki K."/>
            <person name="Tammoja K."/>
            <person name="Tan S.L."/>
            <person name="Tang S."/>
            <person name="Taylor M.S."/>
            <person name="Tegner J."/>
            <person name="Teichmann S.A."/>
            <person name="Ueda H.R."/>
            <person name="van Nimwegen E."/>
            <person name="Verardo R."/>
            <person name="Wei C.L."/>
            <person name="Yagi K."/>
            <person name="Yamanishi H."/>
            <person name="Zabarovsky E."/>
            <person name="Zhu S."/>
            <person name="Zimmer A."/>
            <person name="Hide W."/>
            <person name="Bult C."/>
            <person name="Grimmond S.M."/>
            <person name="Teasdale R.D."/>
            <person name="Liu E.T."/>
            <person name="Brusic V."/>
            <person name="Quackenbush J."/>
            <person name="Wahlestedt C."/>
            <person name="Mattick J.S."/>
            <person name="Hume D.A."/>
            <person name="Kai C."/>
            <person name="Sasaki D."/>
            <person name="Tomaru Y."/>
            <person name="Fukuda S."/>
            <person name="Kanamori-Katayama M."/>
            <person name="Suzuki M."/>
            <person name="Aoki J."/>
            <person name="Arakawa T."/>
            <person name="Iida J."/>
            <person name="Imamura K."/>
            <person name="Itoh M."/>
            <person name="Kato T."/>
            <person name="Kawaji H."/>
            <person name="Kawagashira N."/>
            <person name="Kawashima T."/>
            <person name="Kojima M."/>
            <person name="Kondo S."/>
            <person name="Konno H."/>
            <person name="Nakano K."/>
            <person name="Ninomiya N."/>
            <person name="Nishio T."/>
            <person name="Okada M."/>
            <person name="Plessy C."/>
            <person name="Shibata K."/>
            <person name="Shiraki T."/>
            <person name="Suzuki S."/>
            <person name="Tagami M."/>
            <person name="Waki K."/>
            <person name="Watahiki A."/>
            <person name="Okamura-Oho Y."/>
            <person name="Suzuki H."/>
            <person name="Kawai J."/>
            <person name="Hayashizaki Y."/>
        </authorList>
    </citation>
    <scope>NUCLEOTIDE SEQUENCE [LARGE SCALE MRNA] (ISOFORM 1)</scope>
    <source>
        <strain>C57BL/6J</strain>
        <tissue>Head</tissue>
        <tissue>Hypothalamus</tissue>
        <tissue>Testis</tissue>
    </source>
</reference>
<reference key="2">
    <citation type="journal article" date="2004" name="Genome Res.">
        <title>The status, quality, and expansion of the NIH full-length cDNA project: the Mammalian Gene Collection (MGC).</title>
        <authorList>
            <consortium name="The MGC Project Team"/>
        </authorList>
    </citation>
    <scope>NUCLEOTIDE SEQUENCE [LARGE SCALE MRNA] (ISOFORM 2)</scope>
    <source>
        <strain>C57BL/6J</strain>
        <tissue>Brain</tissue>
    </source>
</reference>
<reference key="3">
    <citation type="journal article" date="2004" name="Mol. Cell. Proteomics">
        <title>Phosphoproteomic analysis of the developing mouse brain.</title>
        <authorList>
            <person name="Ballif B.A."/>
            <person name="Villen J."/>
            <person name="Beausoleil S.A."/>
            <person name="Schwartz D."/>
            <person name="Gygi S.P."/>
        </authorList>
    </citation>
    <scope>IDENTIFICATION BY MASS SPECTROMETRY [LARGE SCALE ANALYSIS]</scope>
    <source>
        <tissue>Embryonic brain</tissue>
    </source>
</reference>
<reference key="4">
    <citation type="journal article" date="2007" name="Proc. Natl. Acad. Sci. U.S.A.">
        <title>Large-scale phosphorylation analysis of mouse liver.</title>
        <authorList>
            <person name="Villen J."/>
            <person name="Beausoleil S.A."/>
            <person name="Gerber S.A."/>
            <person name="Gygi S.P."/>
        </authorList>
    </citation>
    <scope>PHOSPHORYLATION [LARGE SCALE ANALYSIS] AT SER-588 AND THR-596</scope>
    <scope>IDENTIFICATION BY MASS SPECTROMETRY [LARGE SCALE ANALYSIS]</scope>
    <source>
        <tissue>Liver</tissue>
    </source>
</reference>
<reference key="5">
    <citation type="journal article" date="2010" name="Cell">
        <title>A tissue-specific atlas of mouse protein phosphorylation and expression.</title>
        <authorList>
            <person name="Huttlin E.L."/>
            <person name="Jedrychowski M.P."/>
            <person name="Elias J.E."/>
            <person name="Goswami T."/>
            <person name="Rad R."/>
            <person name="Beausoleil S.A."/>
            <person name="Villen J."/>
            <person name="Haas W."/>
            <person name="Sowa M.E."/>
            <person name="Gygi S.P."/>
        </authorList>
    </citation>
    <scope>PHOSPHORYLATION [LARGE SCALE ANALYSIS] AT SER-578; SER-588 AND THR-596</scope>
    <scope>IDENTIFICATION BY MASS SPECTROMETRY [LARGE SCALE ANALYSIS]</scope>
    <source>
        <tissue>Brain</tissue>
        <tissue>Brown adipose tissue</tissue>
        <tissue>Lung</tissue>
        <tissue>Spleen</tissue>
        <tissue>Testis</tissue>
    </source>
</reference>
<sequence length="597" mass="68562">MAANSSVVSVAAAATAVPGVSTVADFSDLQEIKKQLLLIAGLTRERGLLHSSKWSAELAFSLPALPLSELQPPPPLTEEDAQDVDAYTLAKAYFDVKEYDRAAHFLHGCNSKKAYFLYMYSRYLSGEKKKDDETVDSLGPLEKGQVKNEALRELRVELSRKHQARGLDGFGLYLYGVVLRKLDLVKEAIDVFVEATHVLPLHWGAWLELCNLITDKEMLKFLSLPDTWMKEFFLAHIYTELQLIEEALQKYQHLIDVGFSKSSYIVSQIAVAYHNIRDIDKALSIFNELRKQDPYRIENMDTFSNLLYVRSMKSELSYLAHNLCEIDKYRVETCCVIGNYYSLRSQHEKAALYFQRALKLNPRYLGAWTLMGHEYMEMKNTSAAIQAYRHAIEVNKRDYRAWYGLGQTYEILKMPFYCLYYYRRAHQLRPNDSRMLVALGECYEKLNQLVEAKKCYWRAYAVGDVEKKALVKLAKLHEQLTESEQAAQCYIKYIQDIYSCGETVEHLEESTAFRYLAQYYFKCKLWDEASTCAQKCCAFNDTREEGKALLRQILQLRNQGETPTSDTPGTFFLPASLSANNTPTRRVSPLNLSSVTP</sequence>
<name>CDC23_MOUSE</name>